<accession>A4SFS4</accession>
<reference key="1">
    <citation type="submission" date="2007-03" db="EMBL/GenBank/DDBJ databases">
        <title>Complete sequence of Prosthecochloris vibrioformis DSM 265.</title>
        <authorList>
            <consortium name="US DOE Joint Genome Institute"/>
            <person name="Copeland A."/>
            <person name="Lucas S."/>
            <person name="Lapidus A."/>
            <person name="Barry K."/>
            <person name="Detter J.C."/>
            <person name="Glavina del Rio T."/>
            <person name="Hammon N."/>
            <person name="Israni S."/>
            <person name="Pitluck S."/>
            <person name="Schmutz J."/>
            <person name="Larimer F."/>
            <person name="Land M."/>
            <person name="Hauser L."/>
            <person name="Mikhailova N."/>
            <person name="Li T."/>
            <person name="Overmann J."/>
            <person name="Schuster S.C."/>
            <person name="Bryant D.A."/>
            <person name="Richardson P."/>
        </authorList>
    </citation>
    <scope>NUCLEOTIDE SEQUENCE [LARGE SCALE GENOMIC DNA]</scope>
    <source>
        <strain>DSM 265 / 1930</strain>
    </source>
</reference>
<proteinExistence type="inferred from homology"/>
<sequence>MKIKTPLTVKAFAKINLGLFITRKRDDGYHTLSTLFAPIDWYDILSFSAADAIEMSCTNPDLPVDDSNLCVRAARLLQDEGGVKEGVSMLLDKRVPFGAGLGGGSSDAATVLRVLNSFWDINLSSVDLHRFAVSLGADVPYFLEMQGLAYAGGIGDELVDLNMTIPWFIVTVFPCEHISTAWAYGHFHRRFELERPDLRALAPQLSSDGKTELLPLFENDFESAVFEQFGNVRQVKTDLLSAGALFSSLSGSGSAVYGLFEGESAAREVMAAMEAKCYPVSLTPPGFSMRQ</sequence>
<protein>
    <recommendedName>
        <fullName evidence="1">4-diphosphocytidyl-2-C-methyl-D-erythritol kinase</fullName>
        <shortName evidence="1">CMK</shortName>
        <ecNumber evidence="1">2.7.1.148</ecNumber>
    </recommendedName>
    <alternativeName>
        <fullName evidence="1">4-(cytidine-5'-diphospho)-2-C-methyl-D-erythritol kinase</fullName>
    </alternativeName>
</protein>
<evidence type="ECO:0000255" key="1">
    <source>
        <dbReference type="HAMAP-Rule" id="MF_00061"/>
    </source>
</evidence>
<feature type="chain" id="PRO_1000075053" description="4-diphosphocytidyl-2-C-methyl-D-erythritol kinase">
    <location>
        <begin position="1"/>
        <end position="291"/>
    </location>
</feature>
<feature type="active site" evidence="1">
    <location>
        <position position="14"/>
    </location>
</feature>
<feature type="active site" evidence="1">
    <location>
        <position position="138"/>
    </location>
</feature>
<feature type="binding site" evidence="1">
    <location>
        <begin position="96"/>
        <end position="106"/>
    </location>
    <ligand>
        <name>ATP</name>
        <dbReference type="ChEBI" id="CHEBI:30616"/>
    </ligand>
</feature>
<dbReference type="EC" id="2.7.1.148" evidence="1"/>
<dbReference type="EMBL" id="CP000607">
    <property type="protein sequence ID" value="ABP37333.1"/>
    <property type="molecule type" value="Genomic_DNA"/>
</dbReference>
<dbReference type="SMR" id="A4SFS4"/>
<dbReference type="STRING" id="290318.Cvib_1321"/>
<dbReference type="KEGG" id="pvi:Cvib_1321"/>
<dbReference type="eggNOG" id="COG1947">
    <property type="taxonomic scope" value="Bacteria"/>
</dbReference>
<dbReference type="HOGENOM" id="CLU_053057_3_0_10"/>
<dbReference type="OrthoDB" id="9809438at2"/>
<dbReference type="UniPathway" id="UPA00056">
    <property type="reaction ID" value="UER00094"/>
</dbReference>
<dbReference type="GO" id="GO:0050515">
    <property type="term" value="F:4-(cytidine 5'-diphospho)-2-C-methyl-D-erythritol kinase activity"/>
    <property type="evidence" value="ECO:0007669"/>
    <property type="project" value="UniProtKB-UniRule"/>
</dbReference>
<dbReference type="GO" id="GO:0005524">
    <property type="term" value="F:ATP binding"/>
    <property type="evidence" value="ECO:0007669"/>
    <property type="project" value="UniProtKB-UniRule"/>
</dbReference>
<dbReference type="GO" id="GO:0019288">
    <property type="term" value="P:isopentenyl diphosphate biosynthetic process, methylerythritol 4-phosphate pathway"/>
    <property type="evidence" value="ECO:0007669"/>
    <property type="project" value="UniProtKB-UniRule"/>
</dbReference>
<dbReference type="GO" id="GO:0016114">
    <property type="term" value="P:terpenoid biosynthetic process"/>
    <property type="evidence" value="ECO:0007669"/>
    <property type="project" value="InterPro"/>
</dbReference>
<dbReference type="Gene3D" id="3.30.230.10">
    <property type="match status" value="1"/>
</dbReference>
<dbReference type="Gene3D" id="3.30.70.890">
    <property type="entry name" value="GHMP kinase, C-terminal domain"/>
    <property type="match status" value="1"/>
</dbReference>
<dbReference type="HAMAP" id="MF_00061">
    <property type="entry name" value="IspE"/>
    <property type="match status" value="1"/>
</dbReference>
<dbReference type="InterPro" id="IPR013750">
    <property type="entry name" value="GHMP_kinase_C_dom"/>
</dbReference>
<dbReference type="InterPro" id="IPR036554">
    <property type="entry name" value="GHMP_kinase_C_sf"/>
</dbReference>
<dbReference type="InterPro" id="IPR006204">
    <property type="entry name" value="GHMP_kinase_N_dom"/>
</dbReference>
<dbReference type="InterPro" id="IPR004424">
    <property type="entry name" value="IspE"/>
</dbReference>
<dbReference type="InterPro" id="IPR020568">
    <property type="entry name" value="Ribosomal_Su5_D2-typ_SF"/>
</dbReference>
<dbReference type="InterPro" id="IPR014721">
    <property type="entry name" value="Ribsml_uS5_D2-typ_fold_subgr"/>
</dbReference>
<dbReference type="NCBIfam" id="TIGR00154">
    <property type="entry name" value="ispE"/>
    <property type="match status" value="1"/>
</dbReference>
<dbReference type="PANTHER" id="PTHR43527">
    <property type="entry name" value="4-DIPHOSPHOCYTIDYL-2-C-METHYL-D-ERYTHRITOL KINASE, CHLOROPLASTIC"/>
    <property type="match status" value="1"/>
</dbReference>
<dbReference type="PANTHER" id="PTHR43527:SF2">
    <property type="entry name" value="4-DIPHOSPHOCYTIDYL-2-C-METHYL-D-ERYTHRITOL KINASE, CHLOROPLASTIC"/>
    <property type="match status" value="1"/>
</dbReference>
<dbReference type="Pfam" id="PF08544">
    <property type="entry name" value="GHMP_kinases_C"/>
    <property type="match status" value="1"/>
</dbReference>
<dbReference type="Pfam" id="PF00288">
    <property type="entry name" value="GHMP_kinases_N"/>
    <property type="match status" value="1"/>
</dbReference>
<dbReference type="PIRSF" id="PIRSF010376">
    <property type="entry name" value="IspE"/>
    <property type="match status" value="1"/>
</dbReference>
<dbReference type="SUPFAM" id="SSF55060">
    <property type="entry name" value="GHMP Kinase, C-terminal domain"/>
    <property type="match status" value="1"/>
</dbReference>
<dbReference type="SUPFAM" id="SSF54211">
    <property type="entry name" value="Ribosomal protein S5 domain 2-like"/>
    <property type="match status" value="1"/>
</dbReference>
<gene>
    <name evidence="1" type="primary">ispE</name>
    <name type="ordered locus">Cvib_1321</name>
</gene>
<keyword id="KW-0067">ATP-binding</keyword>
<keyword id="KW-0414">Isoprene biosynthesis</keyword>
<keyword id="KW-0418">Kinase</keyword>
<keyword id="KW-0547">Nucleotide-binding</keyword>
<keyword id="KW-0808">Transferase</keyword>
<comment type="function">
    <text evidence="1">Catalyzes the phosphorylation of the position 2 hydroxy group of 4-diphosphocytidyl-2C-methyl-D-erythritol.</text>
</comment>
<comment type="catalytic activity">
    <reaction evidence="1">
        <text>4-CDP-2-C-methyl-D-erythritol + ATP = 4-CDP-2-C-methyl-D-erythritol 2-phosphate + ADP + H(+)</text>
        <dbReference type="Rhea" id="RHEA:18437"/>
        <dbReference type="ChEBI" id="CHEBI:15378"/>
        <dbReference type="ChEBI" id="CHEBI:30616"/>
        <dbReference type="ChEBI" id="CHEBI:57823"/>
        <dbReference type="ChEBI" id="CHEBI:57919"/>
        <dbReference type="ChEBI" id="CHEBI:456216"/>
        <dbReference type="EC" id="2.7.1.148"/>
    </reaction>
</comment>
<comment type="pathway">
    <text evidence="1">Isoprenoid biosynthesis; isopentenyl diphosphate biosynthesis via DXP pathway; isopentenyl diphosphate from 1-deoxy-D-xylulose 5-phosphate: step 3/6.</text>
</comment>
<comment type="similarity">
    <text evidence="1">Belongs to the GHMP kinase family. IspE subfamily.</text>
</comment>
<organism>
    <name type="scientific">Chlorobium phaeovibrioides (strain DSM 265 / 1930)</name>
    <name type="common">Prosthecochloris vibrioformis (strain DSM 265)</name>
    <dbReference type="NCBI Taxonomy" id="290318"/>
    <lineage>
        <taxon>Bacteria</taxon>
        <taxon>Pseudomonadati</taxon>
        <taxon>Chlorobiota</taxon>
        <taxon>Chlorobiia</taxon>
        <taxon>Chlorobiales</taxon>
        <taxon>Chlorobiaceae</taxon>
        <taxon>Chlorobium/Pelodictyon group</taxon>
        <taxon>Chlorobium</taxon>
    </lineage>
</organism>
<name>ISPE_CHLPM</name>